<feature type="chain" id="PRO_0000256842" description="F-actin-capping protein subunit beta">
    <location>
        <begin position="1"/>
        <end position="289"/>
    </location>
</feature>
<feature type="region of interest" description="Disordered" evidence="4">
    <location>
        <begin position="73"/>
        <end position="110"/>
    </location>
</feature>
<feature type="compositionally biased region" description="Gly residues" evidence="4">
    <location>
        <begin position="87"/>
        <end position="106"/>
    </location>
</feature>
<name>CAPZB_NEUCR</name>
<gene>
    <name type="primary">fac-2</name>
    <name type="synonym">cap2</name>
    <name type="ORF">NCU07471</name>
</gene>
<comment type="function">
    <text evidence="1">F-actin-capping proteins bind in a Ca(2+)-independent manner to the fast growing ends of actin filaments (barbed end) thereby blocking the exchange of subunits at these ends. Unlike other capping proteins (such as gelsolin and severin), these proteins do not sever actin filaments (By similarity).</text>
</comment>
<comment type="subunit">
    <text evidence="2">Component of the F-actin capping complex, composed of a heterodimer of an alpha and a beta subunit.</text>
</comment>
<comment type="subcellular location">
    <subcellularLocation>
        <location evidence="2">Cytoplasm</location>
        <location evidence="2">Cytoskeleton</location>
        <location evidence="2">Actin patch</location>
    </subcellularLocation>
    <subcellularLocation>
        <location evidence="3">Cytoplasm</location>
        <location evidence="3">Cytoskeleton</location>
    </subcellularLocation>
</comment>
<comment type="similarity">
    <text evidence="5">Belongs to the F-actin-capping protein beta subunit family.</text>
</comment>
<proteinExistence type="inferred from homology"/>
<keyword id="KW-0117">Actin capping</keyword>
<keyword id="KW-0009">Actin-binding</keyword>
<keyword id="KW-0963">Cytoplasm</keyword>
<keyword id="KW-0206">Cytoskeleton</keyword>
<keyword id="KW-1185">Reference proteome</keyword>
<dbReference type="EMBL" id="CM002236">
    <property type="protein sequence ID" value="EAA34514.2"/>
    <property type="molecule type" value="Genomic_DNA"/>
</dbReference>
<dbReference type="RefSeq" id="XP_963750.2">
    <property type="nucleotide sequence ID" value="XM_958657.3"/>
</dbReference>
<dbReference type="SMR" id="Q7SCP4"/>
<dbReference type="FunCoup" id="Q7SCP4">
    <property type="interactions" value="857"/>
</dbReference>
<dbReference type="STRING" id="367110.Q7SCP4"/>
<dbReference type="PaxDb" id="5141-EFNCRP00000007382"/>
<dbReference type="EnsemblFungi" id="EAA34514">
    <property type="protein sequence ID" value="EAA34514"/>
    <property type="gene ID" value="NCU07471"/>
</dbReference>
<dbReference type="GeneID" id="3879899"/>
<dbReference type="KEGG" id="ncr:NCU07471"/>
<dbReference type="VEuPathDB" id="FungiDB:NCU07471"/>
<dbReference type="HOGENOM" id="CLU_045864_1_0_1"/>
<dbReference type="InParanoid" id="Q7SCP4"/>
<dbReference type="OMA" id="WSNKYYP"/>
<dbReference type="OrthoDB" id="9979678at2759"/>
<dbReference type="Proteomes" id="UP000001805">
    <property type="component" value="Chromosome 1, Linkage Group I"/>
</dbReference>
<dbReference type="GO" id="GO:0099079">
    <property type="term" value="C:actin body"/>
    <property type="evidence" value="ECO:0007669"/>
    <property type="project" value="EnsemblFungi"/>
</dbReference>
<dbReference type="GO" id="GO:0030479">
    <property type="term" value="C:actin cortical patch"/>
    <property type="evidence" value="ECO:0000318"/>
    <property type="project" value="GO_Central"/>
</dbReference>
<dbReference type="GO" id="GO:0000142">
    <property type="term" value="C:cellular bud neck contractile ring"/>
    <property type="evidence" value="ECO:0007669"/>
    <property type="project" value="EnsemblFungi"/>
</dbReference>
<dbReference type="GO" id="GO:0005934">
    <property type="term" value="C:cellular bud tip"/>
    <property type="evidence" value="ECO:0007669"/>
    <property type="project" value="EnsemblFungi"/>
</dbReference>
<dbReference type="GO" id="GO:0008290">
    <property type="term" value="C:F-actin capping protein complex"/>
    <property type="evidence" value="ECO:0000318"/>
    <property type="project" value="GO_Central"/>
</dbReference>
<dbReference type="GO" id="GO:0000131">
    <property type="term" value="C:incipient cellular bud site"/>
    <property type="evidence" value="ECO:0007669"/>
    <property type="project" value="EnsemblFungi"/>
</dbReference>
<dbReference type="GO" id="GO:0043332">
    <property type="term" value="C:mating projection tip"/>
    <property type="evidence" value="ECO:0007669"/>
    <property type="project" value="EnsemblFungi"/>
</dbReference>
<dbReference type="GO" id="GO:0031097">
    <property type="term" value="C:medial cortex"/>
    <property type="evidence" value="ECO:0007669"/>
    <property type="project" value="EnsemblFungi"/>
</dbReference>
<dbReference type="GO" id="GO:0005634">
    <property type="term" value="C:nucleus"/>
    <property type="evidence" value="ECO:0007669"/>
    <property type="project" value="EnsemblFungi"/>
</dbReference>
<dbReference type="GO" id="GO:0051015">
    <property type="term" value="F:actin filament binding"/>
    <property type="evidence" value="ECO:0000318"/>
    <property type="project" value="GO_Central"/>
</dbReference>
<dbReference type="GO" id="GO:0044396">
    <property type="term" value="P:actin cortical patch organization"/>
    <property type="evidence" value="ECO:0007669"/>
    <property type="project" value="EnsemblFungi"/>
</dbReference>
<dbReference type="GO" id="GO:0051016">
    <property type="term" value="P:barbed-end actin filament capping"/>
    <property type="evidence" value="ECO:0000318"/>
    <property type="project" value="GO_Central"/>
</dbReference>
<dbReference type="GO" id="GO:0000902">
    <property type="term" value="P:cell morphogenesis"/>
    <property type="evidence" value="ECO:0000318"/>
    <property type="project" value="GO_Central"/>
</dbReference>
<dbReference type="GO" id="GO:0030447">
    <property type="term" value="P:filamentous growth"/>
    <property type="evidence" value="ECO:0007669"/>
    <property type="project" value="EnsemblFungi"/>
</dbReference>
<dbReference type="GO" id="GO:1904600">
    <property type="term" value="P:mating projection actin fusion focus assembly"/>
    <property type="evidence" value="ECO:0007669"/>
    <property type="project" value="EnsemblFungi"/>
</dbReference>
<dbReference type="GO" id="GO:1903475">
    <property type="term" value="P:mitotic actomyosin contractile ring assembly"/>
    <property type="evidence" value="ECO:0007669"/>
    <property type="project" value="EnsemblFungi"/>
</dbReference>
<dbReference type="GO" id="GO:1902404">
    <property type="term" value="P:mitotic actomyosin contractile ring contraction"/>
    <property type="evidence" value="ECO:0007669"/>
    <property type="project" value="EnsemblFungi"/>
</dbReference>
<dbReference type="FunFam" id="1.20.58.570:FF:000001">
    <property type="entry name" value="F-actin-capping protein subunit beta"/>
    <property type="match status" value="1"/>
</dbReference>
<dbReference type="FunFam" id="3.90.1150.210:FF:000005">
    <property type="entry name" value="F-actin-capping protein subunit beta"/>
    <property type="match status" value="1"/>
</dbReference>
<dbReference type="Gene3D" id="1.20.58.570">
    <property type="match status" value="1"/>
</dbReference>
<dbReference type="Gene3D" id="3.90.1150.210">
    <property type="entry name" value="F-actin capping protein, beta subunit"/>
    <property type="match status" value="1"/>
</dbReference>
<dbReference type="InterPro" id="IPR037282">
    <property type="entry name" value="CapZ_alpha/beta"/>
</dbReference>
<dbReference type="InterPro" id="IPR042276">
    <property type="entry name" value="CapZ_alpha/beta_2"/>
</dbReference>
<dbReference type="InterPro" id="IPR001698">
    <property type="entry name" value="CAPZB"/>
</dbReference>
<dbReference type="InterPro" id="IPR043175">
    <property type="entry name" value="CAPZB_N"/>
</dbReference>
<dbReference type="InterPro" id="IPR019771">
    <property type="entry name" value="F-actin_capping_bsu_CS"/>
</dbReference>
<dbReference type="PANTHER" id="PTHR10619">
    <property type="entry name" value="F-ACTIN-CAPPING PROTEIN SUBUNIT BETA"/>
    <property type="match status" value="1"/>
</dbReference>
<dbReference type="PANTHER" id="PTHR10619:SF0">
    <property type="entry name" value="F-ACTIN-CAPPING PROTEIN SUBUNIT BETA ISOFORMS 1 AND 2"/>
    <property type="match status" value="1"/>
</dbReference>
<dbReference type="Pfam" id="PF01115">
    <property type="entry name" value="F_actin_cap_B"/>
    <property type="match status" value="1"/>
</dbReference>
<dbReference type="PRINTS" id="PR00192">
    <property type="entry name" value="FACTINCAPB"/>
</dbReference>
<dbReference type="SUPFAM" id="SSF90096">
    <property type="entry name" value="Subunits of heterodimeric actin filament capping protein Capz"/>
    <property type="match status" value="1"/>
</dbReference>
<dbReference type="PROSITE" id="PS00231">
    <property type="entry name" value="F_ACTIN_CAPPING_BETA"/>
    <property type="match status" value="1"/>
</dbReference>
<sequence>MATADPFDSALDLLRRLNPKHTAEHLNNLITLAPDLTEDLLSSVDQPLTVKRCKQTGRDYLLCDYNRDGDSYRSPWSNQFDPPLEGGNQGGSGGDGEGDGGEGGAAGSIMPGERVRKMEIKANEAFDVYRELYYEGGVSSVYFWNLDDGFAGVVLLKKSSPTNPSSSGVWDSIHVFEASERGRTSNYRLTSTVILSLATKGNALGEVDLSGNMTRQVEQDLPVENDESHIANIGRLVEDMELKMRNLLQEVYFGKAKDVVGDLRSVGSLSEGQRDRDAQMEIIGSMRKA</sequence>
<evidence type="ECO:0000250" key="1"/>
<evidence type="ECO:0000250" key="2">
    <source>
        <dbReference type="UniProtKB" id="P13517"/>
    </source>
</evidence>
<evidence type="ECO:0000250" key="3">
    <source>
        <dbReference type="UniProtKB" id="Q9HGP5"/>
    </source>
</evidence>
<evidence type="ECO:0000256" key="4">
    <source>
        <dbReference type="SAM" id="MobiDB-lite"/>
    </source>
</evidence>
<evidence type="ECO:0000305" key="5"/>
<protein>
    <recommendedName>
        <fullName>F-actin-capping protein subunit beta</fullName>
    </recommendedName>
    <alternativeName>
        <fullName>F-actin capping protein 2</fullName>
    </alternativeName>
</protein>
<organism>
    <name type="scientific">Neurospora crassa (strain ATCC 24698 / 74-OR23-1A / CBS 708.71 / DSM 1257 / FGSC 987)</name>
    <dbReference type="NCBI Taxonomy" id="367110"/>
    <lineage>
        <taxon>Eukaryota</taxon>
        <taxon>Fungi</taxon>
        <taxon>Dikarya</taxon>
        <taxon>Ascomycota</taxon>
        <taxon>Pezizomycotina</taxon>
        <taxon>Sordariomycetes</taxon>
        <taxon>Sordariomycetidae</taxon>
        <taxon>Sordariales</taxon>
        <taxon>Sordariaceae</taxon>
        <taxon>Neurospora</taxon>
    </lineage>
</organism>
<reference key="1">
    <citation type="journal article" date="2003" name="Nature">
        <title>The genome sequence of the filamentous fungus Neurospora crassa.</title>
        <authorList>
            <person name="Galagan J.E."/>
            <person name="Calvo S.E."/>
            <person name="Borkovich K.A."/>
            <person name="Selker E.U."/>
            <person name="Read N.D."/>
            <person name="Jaffe D.B."/>
            <person name="FitzHugh W."/>
            <person name="Ma L.-J."/>
            <person name="Smirnov S."/>
            <person name="Purcell S."/>
            <person name="Rehman B."/>
            <person name="Elkins T."/>
            <person name="Engels R."/>
            <person name="Wang S."/>
            <person name="Nielsen C.B."/>
            <person name="Butler J."/>
            <person name="Endrizzi M."/>
            <person name="Qui D."/>
            <person name="Ianakiev P."/>
            <person name="Bell-Pedersen D."/>
            <person name="Nelson M.A."/>
            <person name="Werner-Washburne M."/>
            <person name="Selitrennikoff C.P."/>
            <person name="Kinsey J.A."/>
            <person name="Braun E.L."/>
            <person name="Zelter A."/>
            <person name="Schulte U."/>
            <person name="Kothe G.O."/>
            <person name="Jedd G."/>
            <person name="Mewes H.-W."/>
            <person name="Staben C."/>
            <person name="Marcotte E."/>
            <person name="Greenberg D."/>
            <person name="Roy A."/>
            <person name="Foley K."/>
            <person name="Naylor J."/>
            <person name="Stange-Thomann N."/>
            <person name="Barrett R."/>
            <person name="Gnerre S."/>
            <person name="Kamal M."/>
            <person name="Kamvysselis M."/>
            <person name="Mauceli E.W."/>
            <person name="Bielke C."/>
            <person name="Rudd S."/>
            <person name="Frishman D."/>
            <person name="Krystofova S."/>
            <person name="Rasmussen C."/>
            <person name="Metzenberg R.L."/>
            <person name="Perkins D.D."/>
            <person name="Kroken S."/>
            <person name="Cogoni C."/>
            <person name="Macino G."/>
            <person name="Catcheside D.E.A."/>
            <person name="Li W."/>
            <person name="Pratt R.J."/>
            <person name="Osmani S.A."/>
            <person name="DeSouza C.P.C."/>
            <person name="Glass N.L."/>
            <person name="Orbach M.J."/>
            <person name="Berglund J.A."/>
            <person name="Voelker R."/>
            <person name="Yarden O."/>
            <person name="Plamann M."/>
            <person name="Seiler S."/>
            <person name="Dunlap J.C."/>
            <person name="Radford A."/>
            <person name="Aramayo R."/>
            <person name="Natvig D.O."/>
            <person name="Alex L.A."/>
            <person name="Mannhaupt G."/>
            <person name="Ebbole D.J."/>
            <person name="Freitag M."/>
            <person name="Paulsen I."/>
            <person name="Sachs M.S."/>
            <person name="Lander E.S."/>
            <person name="Nusbaum C."/>
            <person name="Birren B.W."/>
        </authorList>
    </citation>
    <scope>NUCLEOTIDE SEQUENCE [LARGE SCALE GENOMIC DNA]</scope>
    <source>
        <strain>ATCC 24698 / 74-OR23-1A / CBS 708.71 / DSM 1257 / FGSC 987</strain>
    </source>
</reference>
<accession>Q7SCP4</accession>